<gene>
    <name evidence="6" type="primary">15</name>
</gene>
<evidence type="ECO:0000255" key="1">
    <source>
        <dbReference type="HAMAP-Rule" id="MF_04111"/>
    </source>
</evidence>
<evidence type="ECO:0000269" key="2">
    <source>
    </source>
</evidence>
<evidence type="ECO:0000303" key="3">
    <source>
    </source>
</evidence>
<evidence type="ECO:0000305" key="4"/>
<evidence type="ECO:0000305" key="5">
    <source>
    </source>
</evidence>
<evidence type="ECO:0000312" key="6">
    <source>
        <dbReference type="EMBL" id="ACY66677.1"/>
    </source>
</evidence>
<keyword id="KW-0929">Antimicrobial</keyword>
<keyword id="KW-0081">Bacteriolytic enzyme</keyword>
<keyword id="KW-0204">Cytolysis</keyword>
<keyword id="KW-0578">Host cell lysis by virus</keyword>
<keyword id="KW-1035">Host cytoplasm</keyword>
<keyword id="KW-0378">Hydrolase</keyword>
<keyword id="KW-0426">Late protein</keyword>
<keyword id="KW-0479">Metal-binding</keyword>
<keyword id="KW-1185">Reference proteome</keyword>
<keyword id="KW-1188">Viral release from host cell</keyword>
<keyword id="KW-0862">Zinc</keyword>
<dbReference type="EC" id="3.5.1.28" evidence="1 2"/>
<dbReference type="EMBL" id="GQ413937">
    <property type="protein sequence ID" value="ACY66677.1"/>
    <property type="molecule type" value="Genomic_DNA"/>
</dbReference>
<dbReference type="RefSeq" id="YP_003347533.1">
    <property type="nucleotide sequence ID" value="NC_013647.1"/>
</dbReference>
<dbReference type="SMR" id="D1L2U8"/>
<dbReference type="GeneID" id="8676079"/>
<dbReference type="KEGG" id="vg:8676079"/>
<dbReference type="OrthoDB" id="13080at10239"/>
<dbReference type="Proteomes" id="UP000002632">
    <property type="component" value="Genome"/>
</dbReference>
<dbReference type="GO" id="GO:0030430">
    <property type="term" value="C:host cell cytoplasm"/>
    <property type="evidence" value="ECO:0007669"/>
    <property type="project" value="UniProtKB-SubCell"/>
</dbReference>
<dbReference type="GO" id="GO:0008745">
    <property type="term" value="F:N-acetylmuramoyl-L-alanine amidase activity"/>
    <property type="evidence" value="ECO:0007669"/>
    <property type="project" value="UniProtKB-UniRule"/>
</dbReference>
<dbReference type="GO" id="GO:0008270">
    <property type="term" value="F:zinc ion binding"/>
    <property type="evidence" value="ECO:0007669"/>
    <property type="project" value="InterPro"/>
</dbReference>
<dbReference type="GO" id="GO:0042742">
    <property type="term" value="P:defense response to bacterium"/>
    <property type="evidence" value="ECO:0007669"/>
    <property type="project" value="UniProtKB-KW"/>
</dbReference>
<dbReference type="GO" id="GO:0032897">
    <property type="term" value="P:negative regulation of viral transcription"/>
    <property type="evidence" value="ECO:0007669"/>
    <property type="project" value="InterPro"/>
</dbReference>
<dbReference type="GO" id="GO:0009253">
    <property type="term" value="P:peptidoglycan catabolic process"/>
    <property type="evidence" value="ECO:0007669"/>
    <property type="project" value="UniProtKB-UniRule"/>
</dbReference>
<dbReference type="GO" id="GO:0044659">
    <property type="term" value="P:viral release from host cell by cytolysis"/>
    <property type="evidence" value="ECO:0007669"/>
    <property type="project" value="UniProtKB-UniRule"/>
</dbReference>
<dbReference type="CDD" id="cd06583">
    <property type="entry name" value="PGRP"/>
    <property type="match status" value="1"/>
</dbReference>
<dbReference type="Gene3D" id="3.40.80.10">
    <property type="entry name" value="Peptidoglycan recognition protein-like"/>
    <property type="match status" value="1"/>
</dbReference>
<dbReference type="HAMAP" id="MF_04111">
    <property type="entry name" value="ENDOLYSIN_T7"/>
    <property type="match status" value="1"/>
</dbReference>
<dbReference type="InterPro" id="IPR036505">
    <property type="entry name" value="Amidase/PGRP_sf"/>
</dbReference>
<dbReference type="InterPro" id="IPR002502">
    <property type="entry name" value="Amidase_domain"/>
</dbReference>
<dbReference type="InterPro" id="IPR034689">
    <property type="entry name" value="Endolysin_T7_type"/>
</dbReference>
<dbReference type="InterPro" id="IPR015510">
    <property type="entry name" value="PGRP"/>
</dbReference>
<dbReference type="InterPro" id="IPR006619">
    <property type="entry name" value="PGRP_domain_met/bac"/>
</dbReference>
<dbReference type="PANTHER" id="PTHR11022">
    <property type="entry name" value="PEPTIDOGLYCAN RECOGNITION PROTEIN"/>
    <property type="match status" value="1"/>
</dbReference>
<dbReference type="PANTHER" id="PTHR11022:SF41">
    <property type="entry name" value="PEPTIDOGLYCAN-RECOGNITION PROTEIN LC-RELATED"/>
    <property type="match status" value="1"/>
</dbReference>
<dbReference type="Pfam" id="PF01510">
    <property type="entry name" value="Amidase_2"/>
    <property type="match status" value="1"/>
</dbReference>
<dbReference type="SMART" id="SM00644">
    <property type="entry name" value="Ami_2"/>
    <property type="match status" value="1"/>
</dbReference>
<dbReference type="SMART" id="SM00701">
    <property type="entry name" value="PGRP"/>
    <property type="match status" value="1"/>
</dbReference>
<dbReference type="SUPFAM" id="SSF55846">
    <property type="entry name" value="N-acetylmuramoyl-L-alanine amidase-like"/>
    <property type="match status" value="1"/>
</dbReference>
<sequence length="151" mass="16823">MAKVQFTKRQETSQIFVHCSATKATMDVGVREIRQWHKEQGWLDVGYHFIIRRDGTVEAGRDQDAVGSHVKGYNSTSVGVCLVGGIDAKGNPEANFTPAQMQALRSLLVELKVQYTGAVLMAHHDVAPKACPSFDLKRWWEKNELVTSDHG</sequence>
<protein>
    <recommendedName>
        <fullName evidence="1 3">Endolysin</fullName>
        <ecNumber evidence="1 2">3.5.1.28</ecNumber>
    </recommendedName>
    <alternativeName>
        <fullName evidence="4">Gene product 15</fullName>
        <shortName evidence="4">gp15</shortName>
    </alternativeName>
    <alternativeName>
        <fullName evidence="1 3">N-acetylmuramoyl-L-alanine amidase</fullName>
    </alternativeName>
</protein>
<proteinExistence type="evidence at protein level"/>
<name>ENLYS_BPK32</name>
<accession>D1L2U8</accession>
<organismHost>
    <name type="scientific">Klebsiella pneumoniae</name>
    <dbReference type="NCBI Taxonomy" id="573"/>
</organismHost>
<comment type="function">
    <text evidence="1 5">Endolysin with amidase activity that degrades host peptidoglycans and participates with the holin and spanin proteins in the sequential events which lead to the programmed host cell lysis releasing the mature viral particles (Probable). Once the holin has permeabilized the host cell membrane, the endolysin can reach the periplasm and breaking down the peptidoglycan layer (By similarity).</text>
</comment>
<comment type="function">
    <text evidence="1">Plays an important role in the switch between viral transcription and genome replication. Once produced in sufficient amount, interacts with and inhibits the viral RNA polymerase that becomes unable to produce additional late transcripts. This lysozyme-polymerase complex in turn plays an active role in viral genome replication and packaging.</text>
</comment>
<comment type="catalytic activity">
    <reaction evidence="1 2">
        <text>Hydrolyzes the link between N-acetylmuramoyl residues and L-amino acid residues in certain cell-wall glycopeptides.</text>
        <dbReference type="EC" id="3.5.1.28"/>
    </reaction>
</comment>
<comment type="cofactor">
    <cofactor evidence="1">
        <name>Zn(2+)</name>
        <dbReference type="ChEBI" id="CHEBI:29105"/>
    </cofactor>
    <text evidence="1">Zn(2+) is required for amidase activity.</text>
</comment>
<comment type="activity regulation">
    <text evidence="1">Binding to the viral RNA polymerase inhibits amidase activity.</text>
</comment>
<comment type="biophysicochemical properties">
    <phDependence>
        <text evidence="2">Optimum pH is 7.</text>
    </phDependence>
</comment>
<comment type="subunit">
    <text evidence="1">Interacts with the viral RNA polymerase.</text>
</comment>
<comment type="subcellular location">
    <subcellularLocation>
        <location evidence="1">Host cytoplasm</location>
    </subcellularLocation>
    <text evidence="1">The endolysin is cytoplasmic, but can reach the periplasmic space with the help of the holins which disrupt the host cell membrane.</text>
</comment>
<comment type="similarity">
    <text evidence="1">Belongs to the N-acetylmuramoyl-L-alanine amidase 2 family.</text>
</comment>
<reference key="1">
    <citation type="submission" date="2009-07" db="EMBL/GenBank/DDBJ databases">
        <title>Genomic sequence and analysis of Klebsiella sp. KP32 bacteriophage.</title>
        <authorList>
            <person name="Drulis-Kawa Z."/>
            <person name="Maciaszczyk-Dziubinska E."/>
            <person name="Bocer T."/>
        </authorList>
    </citation>
    <scope>NUCLEOTIDE SEQUENCE [LARGE SCALE GENOMIC DNA]</scope>
</reference>
<reference key="2">
    <citation type="journal article" date="2013" name="Appl. Microbiol. Biotechnol.">
        <title>Characterization of five novel endolysins from Gram-negative infecting bacteriophages.</title>
        <authorList>
            <person name="Walmagh M."/>
            <person name="Boczkowska B."/>
            <person name="Grymonprez B."/>
            <person name="Briers Y."/>
            <person name="Drulis-Kawa Z."/>
            <person name="Lavigne R."/>
        </authorList>
    </citation>
    <scope>FUNCTION</scope>
    <scope>CATALYTIC ACTIVITY</scope>
    <scope>BIOPHYSICOCHEMICAL PROPERTIES</scope>
</reference>
<feature type="chain" id="PRO_0000458732" description="Endolysin">
    <location>
        <begin position="1"/>
        <end position="151"/>
    </location>
</feature>
<feature type="binding site" evidence="1">
    <location>
        <position position="18"/>
    </location>
    <ligand>
        <name>Zn(2+)</name>
        <dbReference type="ChEBI" id="CHEBI:29105"/>
    </ligand>
</feature>
<feature type="binding site" evidence="1">
    <location>
        <position position="123"/>
    </location>
    <ligand>
        <name>Zn(2+)</name>
        <dbReference type="ChEBI" id="CHEBI:29105"/>
    </ligand>
</feature>
<feature type="binding site" evidence="1">
    <location>
        <position position="131"/>
    </location>
    <ligand>
        <name>Zn(2+)</name>
        <dbReference type="ChEBI" id="CHEBI:29105"/>
    </ligand>
</feature>
<feature type="site" description="Essential for amidase activity and zinc hydrate coordination" evidence="1">
    <location>
        <position position="47"/>
    </location>
</feature>
<organism>
    <name type="scientific">Klebsiella phage KP32</name>
    <name type="common">Bacteriophage KP32</name>
    <dbReference type="NCBI Taxonomy" id="674082"/>
    <lineage>
        <taxon>Viruses</taxon>
        <taxon>Duplodnaviria</taxon>
        <taxon>Heunggongvirae</taxon>
        <taxon>Uroviricota</taxon>
        <taxon>Caudoviricetes</taxon>
        <taxon>Autographiviridae</taxon>
        <taxon>Studiervirinae</taxon>
        <taxon>Przondovirus</taxon>
        <taxon>Przondovirus KP32</taxon>
    </lineage>
</organism>